<gene>
    <name evidence="1" type="primary">lysJ</name>
    <name type="ordered locus">APE_1464</name>
</gene>
<organism>
    <name type="scientific">Aeropyrum pernix (strain ATCC 700893 / DSM 11879 / JCM 9820 / NBRC 100138 / K1)</name>
    <dbReference type="NCBI Taxonomy" id="272557"/>
    <lineage>
        <taxon>Archaea</taxon>
        <taxon>Thermoproteota</taxon>
        <taxon>Thermoprotei</taxon>
        <taxon>Desulfurococcales</taxon>
        <taxon>Desulfurococcaceae</taxon>
        <taxon>Aeropyrum</taxon>
    </lineage>
</organism>
<dbReference type="EC" id="2.6.1.118" evidence="1"/>
<dbReference type="EC" id="2.6.1.124" evidence="1"/>
<dbReference type="EMBL" id="BA000002">
    <property type="protein sequence ID" value="BAA80462.1"/>
    <property type="molecule type" value="Genomic_DNA"/>
</dbReference>
<dbReference type="PIR" id="H72625">
    <property type="entry name" value="H72625"/>
</dbReference>
<dbReference type="SMR" id="Q9YBY6"/>
<dbReference type="STRING" id="272557.APE_1464"/>
<dbReference type="EnsemblBacteria" id="BAA80462">
    <property type="protein sequence ID" value="BAA80462"/>
    <property type="gene ID" value="APE_1464"/>
</dbReference>
<dbReference type="KEGG" id="ape:APE_1464"/>
<dbReference type="eggNOG" id="arCOG00914">
    <property type="taxonomic scope" value="Archaea"/>
</dbReference>
<dbReference type="UniPathway" id="UPA00033">
    <property type="reaction ID" value="UER00038"/>
</dbReference>
<dbReference type="UniPathway" id="UPA00068"/>
<dbReference type="Proteomes" id="UP000002518">
    <property type="component" value="Chromosome"/>
</dbReference>
<dbReference type="GO" id="GO:0005737">
    <property type="term" value="C:cytoplasm"/>
    <property type="evidence" value="ECO:0007669"/>
    <property type="project" value="UniProtKB-SubCell"/>
</dbReference>
<dbReference type="GO" id="GO:0042802">
    <property type="term" value="F:identical protein binding"/>
    <property type="evidence" value="ECO:0007669"/>
    <property type="project" value="TreeGrafter"/>
</dbReference>
<dbReference type="GO" id="GO:0030170">
    <property type="term" value="F:pyridoxal phosphate binding"/>
    <property type="evidence" value="ECO:0007669"/>
    <property type="project" value="InterPro"/>
</dbReference>
<dbReference type="GO" id="GO:0008483">
    <property type="term" value="F:transaminase activity"/>
    <property type="evidence" value="ECO:0007669"/>
    <property type="project" value="UniProtKB-UniRule"/>
</dbReference>
<dbReference type="GO" id="GO:0042450">
    <property type="term" value="P:arginine biosynthetic process via ornithine"/>
    <property type="evidence" value="ECO:0007669"/>
    <property type="project" value="UniProtKB-UniRule"/>
</dbReference>
<dbReference type="GO" id="GO:0006526">
    <property type="term" value="P:L-arginine biosynthetic process"/>
    <property type="evidence" value="ECO:0007669"/>
    <property type="project" value="UniProtKB-UniPathway"/>
</dbReference>
<dbReference type="GO" id="GO:0019878">
    <property type="term" value="P:lysine biosynthetic process via aminoadipic acid"/>
    <property type="evidence" value="ECO:0007669"/>
    <property type="project" value="UniProtKB-UniRule"/>
</dbReference>
<dbReference type="CDD" id="cd00610">
    <property type="entry name" value="OAT_like"/>
    <property type="match status" value="1"/>
</dbReference>
<dbReference type="FunFam" id="3.40.640.10:FF:000004">
    <property type="entry name" value="Acetylornithine aminotransferase"/>
    <property type="match status" value="1"/>
</dbReference>
<dbReference type="Gene3D" id="3.90.1150.10">
    <property type="entry name" value="Aspartate Aminotransferase, domain 1"/>
    <property type="match status" value="1"/>
</dbReference>
<dbReference type="Gene3D" id="3.40.640.10">
    <property type="entry name" value="Type I PLP-dependent aspartate aminotransferase-like (Major domain)"/>
    <property type="match status" value="1"/>
</dbReference>
<dbReference type="HAMAP" id="MF_02084">
    <property type="entry name" value="LysJ_aminotrans_3"/>
    <property type="match status" value="1"/>
</dbReference>
<dbReference type="InterPro" id="IPR005814">
    <property type="entry name" value="Aminotrans_3"/>
</dbReference>
<dbReference type="InterPro" id="IPR049704">
    <property type="entry name" value="Aminotrans_3_PPA_site"/>
</dbReference>
<dbReference type="InterPro" id="IPR050103">
    <property type="entry name" value="Class-III_PLP-dep_AT"/>
</dbReference>
<dbReference type="InterPro" id="IPR037537">
    <property type="entry name" value="LysJ"/>
</dbReference>
<dbReference type="InterPro" id="IPR015424">
    <property type="entry name" value="PyrdxlP-dep_Trfase"/>
</dbReference>
<dbReference type="InterPro" id="IPR015421">
    <property type="entry name" value="PyrdxlP-dep_Trfase_major"/>
</dbReference>
<dbReference type="InterPro" id="IPR015422">
    <property type="entry name" value="PyrdxlP-dep_Trfase_small"/>
</dbReference>
<dbReference type="PANTHER" id="PTHR11986:SF79">
    <property type="entry name" value="ACETYLORNITHINE AMINOTRANSFERASE, MITOCHONDRIAL"/>
    <property type="match status" value="1"/>
</dbReference>
<dbReference type="PANTHER" id="PTHR11986">
    <property type="entry name" value="AMINOTRANSFERASE CLASS III"/>
    <property type="match status" value="1"/>
</dbReference>
<dbReference type="Pfam" id="PF00202">
    <property type="entry name" value="Aminotran_3"/>
    <property type="match status" value="1"/>
</dbReference>
<dbReference type="PIRSF" id="PIRSF000521">
    <property type="entry name" value="Transaminase_4ab_Lys_Orn"/>
    <property type="match status" value="1"/>
</dbReference>
<dbReference type="SUPFAM" id="SSF53383">
    <property type="entry name" value="PLP-dependent transferases"/>
    <property type="match status" value="1"/>
</dbReference>
<dbReference type="PROSITE" id="PS00600">
    <property type="entry name" value="AA_TRANSFER_CLASS_3"/>
    <property type="match status" value="1"/>
</dbReference>
<name>LYSJ_AERPE</name>
<accession>Q9YBY6</accession>
<comment type="function">
    <text evidence="1">Involved in both the arginine and lysine biosynthetic pathways.</text>
</comment>
<comment type="catalytic activity">
    <reaction evidence="1">
        <text>[amino-group carrier protein]-C-terminal-gamma-(L-lysyl)-L-glutamate + 2-oxoglutarate = [amino-group carrier protein]-C-terminal-N-(1-carboxy-5-oxopentan-1-yl)-L-glutamine + L-glutamate</text>
        <dbReference type="Rhea" id="RHEA:41952"/>
        <dbReference type="Rhea" id="RHEA-COMP:9714"/>
        <dbReference type="Rhea" id="RHEA-COMP:9715"/>
        <dbReference type="ChEBI" id="CHEBI:16810"/>
        <dbReference type="ChEBI" id="CHEBI:29985"/>
        <dbReference type="ChEBI" id="CHEBI:78501"/>
        <dbReference type="ChEBI" id="CHEBI:78526"/>
        <dbReference type="EC" id="2.6.1.118"/>
    </reaction>
</comment>
<comment type="catalytic activity">
    <reaction evidence="1">
        <text>[amino-group carrier protein]-C-terminal-gamma-(L-ornithyl)-L-glutamate + 2-oxoglutarate = [amino-group carrier protein]-C-terminal-gamma-(L-glutamyl-5-semialdehyde)-L-glutamate + L-glutamate</text>
        <dbReference type="Rhea" id="RHEA:52672"/>
        <dbReference type="Rhea" id="RHEA-COMP:13327"/>
        <dbReference type="Rhea" id="RHEA-COMP:13328"/>
        <dbReference type="ChEBI" id="CHEBI:16810"/>
        <dbReference type="ChEBI" id="CHEBI:29985"/>
        <dbReference type="ChEBI" id="CHEBI:136761"/>
        <dbReference type="ChEBI" id="CHEBI:136763"/>
        <dbReference type="EC" id="2.6.1.124"/>
    </reaction>
</comment>
<comment type="cofactor">
    <cofactor evidence="1">
        <name>pyridoxal 5'-phosphate</name>
        <dbReference type="ChEBI" id="CHEBI:597326"/>
    </cofactor>
    <text evidence="1">Binds 1 pyridoxal phosphate per subunit.</text>
</comment>
<comment type="pathway">
    <text evidence="1">Amino-acid biosynthesis; L-lysine biosynthesis via AAA pathway; L-lysine from L-alpha-aminoadipate (Thermus route): step 4/5.</text>
</comment>
<comment type="pathway">
    <text evidence="1">Amino-acid biosynthesis; L-arginine biosynthesis.</text>
</comment>
<comment type="subunit">
    <text evidence="1">Homodimer.</text>
</comment>
<comment type="subcellular location">
    <subcellularLocation>
        <location evidence="1">Cytoplasm</location>
    </subcellularLocation>
</comment>
<comment type="similarity">
    <text evidence="1">Belongs to the class-III pyridoxal-phosphate-dependent aminotransferase family. LysJ subfamily.</text>
</comment>
<proteinExistence type="inferred from homology"/>
<sequence length="388" mass="41523">MNVVLKFVRFYGYRGLRIVKGSMQYVWDDSGRKYLDCHAGHGAAFLGHSNPAIVEAVVRQARELVAASSSFSTPSLEEALTEFSRIAPPWAEEIVFLNTGTEAVEAALKAAWLATGKRGIVALKNSFHGRTLASLSVTWNPRYRRGVPVLDTRFLSPSTDPGEVEKLVPEDTAAIIVEPIQGEGGLTKIYAELAKALREAADRVGALLIFDEIQTGFGRTGRVWAHESLGVEPDIMTAGKSIAGGLPASAVLSREGVLATLASGRHGSTHAANPLSMAAVAAASRFLREEGVPDKARAAGALLEGLLRDRIEGLRLVRGVRGEGLMLGVELRLDPGPVLRCLQESERVLALRSGATVVRLLPPYSISREDAEMVVYGLERCICGGSGC</sequence>
<reference key="1">
    <citation type="journal article" date="1999" name="DNA Res.">
        <title>Complete genome sequence of an aerobic hyper-thermophilic crenarchaeon, Aeropyrum pernix K1.</title>
        <authorList>
            <person name="Kawarabayasi Y."/>
            <person name="Hino Y."/>
            <person name="Horikawa H."/>
            <person name="Yamazaki S."/>
            <person name="Haikawa Y."/>
            <person name="Jin-no K."/>
            <person name="Takahashi M."/>
            <person name="Sekine M."/>
            <person name="Baba S."/>
            <person name="Ankai A."/>
            <person name="Kosugi H."/>
            <person name="Hosoyama A."/>
            <person name="Fukui S."/>
            <person name="Nagai Y."/>
            <person name="Nishijima K."/>
            <person name="Nakazawa H."/>
            <person name="Takamiya M."/>
            <person name="Masuda S."/>
            <person name="Funahashi T."/>
            <person name="Tanaka T."/>
            <person name="Kudoh Y."/>
            <person name="Yamazaki J."/>
            <person name="Kushida N."/>
            <person name="Oguchi A."/>
            <person name="Aoki K."/>
            <person name="Kubota K."/>
            <person name="Nakamura Y."/>
            <person name="Nomura N."/>
            <person name="Sako Y."/>
            <person name="Kikuchi H."/>
        </authorList>
    </citation>
    <scope>NUCLEOTIDE SEQUENCE [LARGE SCALE GENOMIC DNA]</scope>
    <source>
        <strain>ATCC 700893 / DSM 11879 / JCM 9820 / NBRC 100138 / K1</strain>
    </source>
</reference>
<keyword id="KW-0028">Amino-acid biosynthesis</keyword>
<keyword id="KW-0032">Aminotransferase</keyword>
<keyword id="KW-0055">Arginine biosynthesis</keyword>
<keyword id="KW-0963">Cytoplasm</keyword>
<keyword id="KW-0457">Lysine biosynthesis</keyword>
<keyword id="KW-0663">Pyridoxal phosphate</keyword>
<keyword id="KW-1185">Reference proteome</keyword>
<keyword id="KW-0808">Transferase</keyword>
<protein>
    <recommendedName>
        <fullName evidence="1">Putative [LysW]-aminoadipate semialdehyde/glutamate semialdehyde transaminase</fullName>
        <ecNumber evidence="1">2.6.1.118</ecNumber>
        <ecNumber evidence="1">2.6.1.124</ecNumber>
    </recommendedName>
</protein>
<evidence type="ECO:0000255" key="1">
    <source>
        <dbReference type="HAMAP-Rule" id="MF_02084"/>
    </source>
</evidence>
<feature type="chain" id="PRO_0000112818" description="Putative [LysW]-aminoadipate semialdehyde/glutamate semialdehyde transaminase">
    <location>
        <begin position="1"/>
        <end position="388"/>
    </location>
</feature>
<feature type="binding site" evidence="1">
    <location>
        <begin position="100"/>
        <end position="101"/>
    </location>
    <ligand>
        <name>pyridoxal 5'-phosphate</name>
        <dbReference type="ChEBI" id="CHEBI:597326"/>
    </ligand>
</feature>
<feature type="binding site" evidence="1">
    <location>
        <position position="127"/>
    </location>
    <ligand>
        <name>pyridoxal 5'-phosphate</name>
        <dbReference type="ChEBI" id="CHEBI:597326"/>
    </ligand>
</feature>
<feature type="binding site" evidence="1">
    <location>
        <position position="130"/>
    </location>
    <ligand>
        <name>substrate</name>
    </ligand>
</feature>
<feature type="binding site" evidence="1">
    <location>
        <begin position="211"/>
        <end position="214"/>
    </location>
    <ligand>
        <name>pyridoxal 5'-phosphate</name>
        <dbReference type="ChEBI" id="CHEBI:597326"/>
    </ligand>
</feature>
<feature type="binding site" evidence="1">
    <location>
        <position position="268"/>
    </location>
    <ligand>
        <name>substrate</name>
    </ligand>
</feature>
<feature type="binding site" evidence="1">
    <location>
        <position position="269"/>
    </location>
    <ligand>
        <name>pyridoxal 5'-phosphate</name>
        <dbReference type="ChEBI" id="CHEBI:597326"/>
    </ligand>
</feature>
<feature type="modified residue" description="N6-(pyridoxal phosphate)lysine" evidence="1">
    <location>
        <position position="240"/>
    </location>
</feature>